<reference key="1">
    <citation type="journal article" date="2007" name="Science">
        <title>Genome sequence of Aedes aegypti, a major arbovirus vector.</title>
        <authorList>
            <person name="Nene V."/>
            <person name="Wortman J.R."/>
            <person name="Lawson D."/>
            <person name="Haas B.J."/>
            <person name="Kodira C.D."/>
            <person name="Tu Z.J."/>
            <person name="Loftus B.J."/>
            <person name="Xi Z."/>
            <person name="Megy K."/>
            <person name="Grabherr M."/>
            <person name="Ren Q."/>
            <person name="Zdobnov E.M."/>
            <person name="Lobo N.F."/>
            <person name="Campbell K.S."/>
            <person name="Brown S.E."/>
            <person name="Bonaldo M.F."/>
            <person name="Zhu J."/>
            <person name="Sinkins S.P."/>
            <person name="Hogenkamp D.G."/>
            <person name="Amedeo P."/>
            <person name="Arensburger P."/>
            <person name="Atkinson P.W."/>
            <person name="Bidwell S.L."/>
            <person name="Biedler J."/>
            <person name="Birney E."/>
            <person name="Bruggner R.V."/>
            <person name="Costas J."/>
            <person name="Coy M.R."/>
            <person name="Crabtree J."/>
            <person name="Crawford M."/>
            <person name="DeBruyn B."/>
            <person name="DeCaprio D."/>
            <person name="Eiglmeier K."/>
            <person name="Eisenstadt E."/>
            <person name="El-Dorry H."/>
            <person name="Gelbart W.M."/>
            <person name="Gomes S.L."/>
            <person name="Hammond M."/>
            <person name="Hannick L.I."/>
            <person name="Hogan J.R."/>
            <person name="Holmes M.H."/>
            <person name="Jaffe D."/>
            <person name="Johnston S.J."/>
            <person name="Kennedy R.C."/>
            <person name="Koo H."/>
            <person name="Kravitz S."/>
            <person name="Kriventseva E.V."/>
            <person name="Kulp D."/>
            <person name="Labutti K."/>
            <person name="Lee E."/>
            <person name="Li S."/>
            <person name="Lovin D.D."/>
            <person name="Mao C."/>
            <person name="Mauceli E."/>
            <person name="Menck C.F."/>
            <person name="Miller J.R."/>
            <person name="Montgomery P."/>
            <person name="Mori A."/>
            <person name="Nascimento A.L."/>
            <person name="Naveira H.F."/>
            <person name="Nusbaum C."/>
            <person name="O'Leary S.B."/>
            <person name="Orvis J."/>
            <person name="Pertea M."/>
            <person name="Quesneville H."/>
            <person name="Reidenbach K.R."/>
            <person name="Rogers Y.-H.C."/>
            <person name="Roth C.W."/>
            <person name="Schneider J.R."/>
            <person name="Schatz M."/>
            <person name="Shumway M."/>
            <person name="Stanke M."/>
            <person name="Stinson E.O."/>
            <person name="Tubio J.M.C."/>
            <person name="Vanzee J.P."/>
            <person name="Verjovski-Almeida S."/>
            <person name="Werner D."/>
            <person name="White O.R."/>
            <person name="Wyder S."/>
            <person name="Zeng Q."/>
            <person name="Zhao Q."/>
            <person name="Zhao Y."/>
            <person name="Hill C.A."/>
            <person name="Raikhel A.S."/>
            <person name="Soares M.B."/>
            <person name="Knudson D.L."/>
            <person name="Lee N.H."/>
            <person name="Galagan J."/>
            <person name="Salzberg S.L."/>
            <person name="Paulsen I.T."/>
            <person name="Dimopoulos G."/>
            <person name="Collins F.H."/>
            <person name="Bruce B."/>
            <person name="Fraser-Liggett C.M."/>
            <person name="Severson D.W."/>
        </authorList>
    </citation>
    <scope>NUCLEOTIDE SEQUENCE [LARGE SCALE GENOMIC DNA]</scope>
    <source>
        <strain>LVPib12</strain>
    </source>
</reference>
<accession>Q174D3</accession>
<name>MED19_AEDAE</name>
<evidence type="ECO:0000250" key="1"/>
<evidence type="ECO:0000256" key="2">
    <source>
        <dbReference type="SAM" id="MobiDB-lite"/>
    </source>
</evidence>
<evidence type="ECO:0000305" key="3"/>
<proteinExistence type="inferred from homology"/>
<keyword id="KW-0010">Activator</keyword>
<keyword id="KW-0539">Nucleus</keyword>
<keyword id="KW-1185">Reference proteome</keyword>
<keyword id="KW-0804">Transcription</keyword>
<keyword id="KW-0805">Transcription regulation</keyword>
<dbReference type="EMBL" id="CH477413">
    <property type="protein sequence ID" value="EAT41431.1"/>
    <property type="molecule type" value="Genomic_DNA"/>
</dbReference>
<dbReference type="SMR" id="Q174D3"/>
<dbReference type="FunCoup" id="Q174D3">
    <property type="interactions" value="233"/>
</dbReference>
<dbReference type="STRING" id="7159.Q174D3"/>
<dbReference type="PaxDb" id="7159-AAEL006934-PA"/>
<dbReference type="EnsemblMetazoa" id="AAEL006934-RA">
    <property type="protein sequence ID" value="AAEL006934-PA"/>
    <property type="gene ID" value="AAEL006934"/>
</dbReference>
<dbReference type="GeneID" id="5568522"/>
<dbReference type="KEGG" id="aag:5568522"/>
<dbReference type="CTD" id="219541"/>
<dbReference type="VEuPathDB" id="VectorBase:AAEL006934"/>
<dbReference type="eggNOG" id="KOG4043">
    <property type="taxonomic scope" value="Eukaryota"/>
</dbReference>
<dbReference type="HOGENOM" id="CLU_098332_1_0_1"/>
<dbReference type="InParanoid" id="Q174D3"/>
<dbReference type="OMA" id="QRFCGSK"/>
<dbReference type="OrthoDB" id="10044050at2759"/>
<dbReference type="PhylomeDB" id="Q174D3"/>
<dbReference type="Proteomes" id="UP000008820">
    <property type="component" value="Chromosome 3"/>
</dbReference>
<dbReference type="Proteomes" id="UP000682892">
    <property type="component" value="Unassembled WGS sequence"/>
</dbReference>
<dbReference type="GO" id="GO:0016592">
    <property type="term" value="C:mediator complex"/>
    <property type="evidence" value="ECO:0007669"/>
    <property type="project" value="InterPro"/>
</dbReference>
<dbReference type="GO" id="GO:0003712">
    <property type="term" value="F:transcription coregulator activity"/>
    <property type="evidence" value="ECO:0007669"/>
    <property type="project" value="InterPro"/>
</dbReference>
<dbReference type="GO" id="GO:0045944">
    <property type="term" value="P:positive regulation of transcription by RNA polymerase II"/>
    <property type="evidence" value="ECO:0007669"/>
    <property type="project" value="TreeGrafter"/>
</dbReference>
<dbReference type="InterPro" id="IPR019403">
    <property type="entry name" value="Mediator_Med19_met"/>
</dbReference>
<dbReference type="PANTHER" id="PTHR22536">
    <property type="entry name" value="LUNG CANCER METASTASIS-RELATED LCMR1 PROTEIN"/>
    <property type="match status" value="1"/>
</dbReference>
<dbReference type="PANTHER" id="PTHR22536:SF1">
    <property type="entry name" value="MEDIATOR OF RNA POLYMERASE II TRANSCRIPTION SUBUNIT 19"/>
    <property type="match status" value="1"/>
</dbReference>
<dbReference type="Pfam" id="PF10278">
    <property type="entry name" value="Med19"/>
    <property type="match status" value="1"/>
</dbReference>
<organism>
    <name type="scientific">Aedes aegypti</name>
    <name type="common">Yellowfever mosquito</name>
    <name type="synonym">Culex aegypti</name>
    <dbReference type="NCBI Taxonomy" id="7159"/>
    <lineage>
        <taxon>Eukaryota</taxon>
        <taxon>Metazoa</taxon>
        <taxon>Ecdysozoa</taxon>
        <taxon>Arthropoda</taxon>
        <taxon>Hexapoda</taxon>
        <taxon>Insecta</taxon>
        <taxon>Pterygota</taxon>
        <taxon>Neoptera</taxon>
        <taxon>Endopterygota</taxon>
        <taxon>Diptera</taxon>
        <taxon>Nematocera</taxon>
        <taxon>Culicoidea</taxon>
        <taxon>Culicidae</taxon>
        <taxon>Culicinae</taxon>
        <taxon>Aedini</taxon>
        <taxon>Aedes</taxon>
        <taxon>Stegomyia</taxon>
    </lineage>
</organism>
<comment type="function">
    <text evidence="1">Component of the Mediator complex, a coactivator involved in the regulated transcription of nearly all RNA polymerase II-dependent genes. Mediator functions as a bridge to convey information from gene-specific regulatory proteins to the basal RNA polymerase II transcription machinery. Mediator is recruited to promoters by direct interactions with regulatory proteins and serves as a scaffold for the assembly of a functional preinitiation complex with RNA polymerase II and the general transcription factors (By similarity).</text>
</comment>
<comment type="subunit">
    <text evidence="1">Component of the Mediator complex.</text>
</comment>
<comment type="subcellular location">
    <subcellularLocation>
        <location evidence="3">Nucleus</location>
    </subcellularLocation>
</comment>
<comment type="similarity">
    <text evidence="3">Belongs to the Mediator complex subunit 19 family.</text>
</comment>
<sequence length="253" mass="28087">MFNNYGNVMMTDQFRKVEQYSPKSSPRAGGAGGRSPVVARQDSSGTLKTTIQLGKNPSIVHSGPFYLMKEPPGEGELTGATNLMAHYGLEHSYSKFSGKKVKEQLSSFLPNLPGVIDGPGHLDNSSLRSVIEKPPIGGKDLLPLTSVQLAGFRLHPGPLPEQYKHLKSVPTRKHKNKHKKHKYKEGVAPLSEQSALEASGLDTHEKKHKKQKRHEDDKERKKRKKEKKRKKQRHSPEHPGSGAASMPPQTQVF</sequence>
<feature type="chain" id="PRO_0000304772" description="Mediator of RNA polymerase II transcription subunit 19">
    <location>
        <begin position="1"/>
        <end position="253"/>
    </location>
</feature>
<feature type="region of interest" description="Disordered" evidence="2">
    <location>
        <begin position="18"/>
        <end position="49"/>
    </location>
</feature>
<feature type="region of interest" description="Disordered" evidence="2">
    <location>
        <begin position="157"/>
        <end position="253"/>
    </location>
</feature>
<feature type="compositionally biased region" description="Low complexity" evidence="2">
    <location>
        <begin position="21"/>
        <end position="40"/>
    </location>
</feature>
<feature type="compositionally biased region" description="Basic residues" evidence="2">
    <location>
        <begin position="165"/>
        <end position="183"/>
    </location>
</feature>
<feature type="compositionally biased region" description="Basic residues" evidence="2">
    <location>
        <begin position="220"/>
        <end position="233"/>
    </location>
</feature>
<protein>
    <recommendedName>
        <fullName>Mediator of RNA polymerase II transcription subunit 19</fullName>
    </recommendedName>
    <alternativeName>
        <fullName>Mediator complex subunit 19</fullName>
    </alternativeName>
</protein>
<gene>
    <name type="primary">MED19</name>
    <name type="ORF">AAEL006934</name>
</gene>